<reference key="1">
    <citation type="journal article" date="2007" name="Virology">
        <title>Genome of the Acidianus bottle-shaped virus and insights into the replication and packaging mechanisms.</title>
        <authorList>
            <person name="Peng X."/>
            <person name="Basta T."/>
            <person name="Haring M."/>
            <person name="Garrett R.A."/>
            <person name="Prangishvili D."/>
        </authorList>
    </citation>
    <scope>NUCLEOTIDE SEQUENCE [GENOMIC DNA]</scope>
</reference>
<accession>A4ZUD4</accession>
<gene>
    <name type="ORF">ORF88</name>
</gene>
<sequence>MSKRTVHNFERAVHLVMEGDPLGCDLIHLYYSKSPSLNAFINYLLCFYCPCKPPLEVCYKSVKYLYDTEKLSPSEYAFLIERLRKWNH</sequence>
<proteinExistence type="predicted"/>
<protein>
    <recommendedName>
        <fullName>Uncharacterized protein ORF88</fullName>
    </recommendedName>
</protein>
<organismHost>
    <name type="scientific">Acidianus convivator</name>
    <dbReference type="NCBI Taxonomy" id="269667"/>
</organismHost>
<feature type="chain" id="PRO_0000384840" description="Uncharacterized protein ORF88">
    <location>
        <begin position="1"/>
        <end position="88"/>
    </location>
</feature>
<keyword id="KW-1185">Reference proteome</keyword>
<dbReference type="EMBL" id="EF432053">
    <property type="protein sequence ID" value="ABP73438.1"/>
    <property type="molecule type" value="Genomic_DNA"/>
</dbReference>
<dbReference type="RefSeq" id="YP_001210352.1">
    <property type="nucleotide sequence ID" value="NC_009452.1"/>
</dbReference>
<dbReference type="GeneID" id="5129848"/>
<dbReference type="KEGG" id="vg:5129848"/>
<dbReference type="Proteomes" id="UP000000513">
    <property type="component" value="Segment"/>
</dbReference>
<name>Y088_ABVP</name>
<organism>
    <name type="scientific">Acidianus bottle-shaped virus (isolate Italy/Pozzuoli)</name>
    <name type="common">ABV</name>
    <dbReference type="NCBI Taxonomy" id="654911"/>
    <lineage>
        <taxon>Viruses</taxon>
        <taxon>Viruses incertae sedis</taxon>
        <taxon>Ampullaviridae</taxon>
        <taxon>Bottigliavirus</taxon>
        <taxon>Bottigliavirus ABV</taxon>
    </lineage>
</organism>